<dbReference type="EC" id="2.1.1.216" evidence="1"/>
<dbReference type="EMBL" id="CP000077">
    <property type="protein sequence ID" value="AAY80678.1"/>
    <property type="molecule type" value="Genomic_DNA"/>
</dbReference>
<dbReference type="RefSeq" id="WP_011278180.1">
    <property type="nucleotide sequence ID" value="NC_007181.1"/>
</dbReference>
<dbReference type="SMR" id="Q4J947"/>
<dbReference type="STRING" id="330779.Saci_1343"/>
<dbReference type="GeneID" id="14551846"/>
<dbReference type="KEGG" id="sai:Saci_1343"/>
<dbReference type="PATRIC" id="fig|330779.12.peg.1296"/>
<dbReference type="eggNOG" id="arCOG01219">
    <property type="taxonomic scope" value="Archaea"/>
</dbReference>
<dbReference type="HOGENOM" id="CLU_010862_5_1_2"/>
<dbReference type="Proteomes" id="UP000001018">
    <property type="component" value="Chromosome"/>
</dbReference>
<dbReference type="GO" id="GO:0160104">
    <property type="term" value="F:tRNA (guanine(26)-N2)-dimethyltransferase activity"/>
    <property type="evidence" value="ECO:0007669"/>
    <property type="project" value="UniProtKB-UniRule"/>
</dbReference>
<dbReference type="GO" id="GO:0000049">
    <property type="term" value="F:tRNA binding"/>
    <property type="evidence" value="ECO:0007669"/>
    <property type="project" value="UniProtKB-KW"/>
</dbReference>
<dbReference type="GO" id="GO:0002940">
    <property type="term" value="P:tRNA N2-guanine methylation"/>
    <property type="evidence" value="ECO:0007669"/>
    <property type="project" value="TreeGrafter"/>
</dbReference>
<dbReference type="Gene3D" id="3.30.56.70">
    <property type="entry name" value="N2,N2-dimethylguanosine tRNA methyltransferase, C-terminal domain"/>
    <property type="match status" value="1"/>
</dbReference>
<dbReference type="Gene3D" id="3.40.50.150">
    <property type="entry name" value="Vaccinia Virus protein VP39"/>
    <property type="match status" value="1"/>
</dbReference>
<dbReference type="HAMAP" id="MF_00290">
    <property type="entry name" value="tRNA_dimethyltr_TRM1"/>
    <property type="match status" value="1"/>
</dbReference>
<dbReference type="InterPro" id="IPR029063">
    <property type="entry name" value="SAM-dependent_MTases_sf"/>
</dbReference>
<dbReference type="InterPro" id="IPR002905">
    <property type="entry name" value="Trm1"/>
</dbReference>
<dbReference type="InterPro" id="IPR022923">
    <property type="entry name" value="TRM1_arc_bac"/>
</dbReference>
<dbReference type="InterPro" id="IPR042296">
    <property type="entry name" value="tRNA_met_Trm1_C"/>
</dbReference>
<dbReference type="NCBIfam" id="NF003331">
    <property type="entry name" value="PRK04338.1-7"/>
    <property type="match status" value="1"/>
</dbReference>
<dbReference type="PANTHER" id="PTHR10631">
    <property type="entry name" value="N 2 ,N 2 -DIMETHYLGUANOSINE TRNA METHYLTRANSFERASE"/>
    <property type="match status" value="1"/>
</dbReference>
<dbReference type="PANTHER" id="PTHR10631:SF3">
    <property type="entry name" value="TRNA (GUANINE(26)-N(2))-DIMETHYLTRANSFERASE"/>
    <property type="match status" value="1"/>
</dbReference>
<dbReference type="Pfam" id="PF02005">
    <property type="entry name" value="TRM"/>
    <property type="match status" value="1"/>
</dbReference>
<dbReference type="SUPFAM" id="SSF53335">
    <property type="entry name" value="S-adenosyl-L-methionine-dependent methyltransferases"/>
    <property type="match status" value="1"/>
</dbReference>
<dbReference type="PROSITE" id="PS51626">
    <property type="entry name" value="SAM_MT_TRM1"/>
    <property type="match status" value="1"/>
</dbReference>
<organism>
    <name type="scientific">Sulfolobus acidocaldarius (strain ATCC 33909 / DSM 639 / JCM 8929 / NBRC 15157 / NCIMB 11770)</name>
    <dbReference type="NCBI Taxonomy" id="330779"/>
    <lineage>
        <taxon>Archaea</taxon>
        <taxon>Thermoproteota</taxon>
        <taxon>Thermoprotei</taxon>
        <taxon>Sulfolobales</taxon>
        <taxon>Sulfolobaceae</taxon>
        <taxon>Sulfolobus</taxon>
    </lineage>
</organism>
<evidence type="ECO:0000255" key="1">
    <source>
        <dbReference type="HAMAP-Rule" id="MF_00290"/>
    </source>
</evidence>
<name>TRM1_SULAC</name>
<reference key="1">
    <citation type="journal article" date="2005" name="J. Bacteriol.">
        <title>The genome of Sulfolobus acidocaldarius, a model organism of the Crenarchaeota.</title>
        <authorList>
            <person name="Chen L."/>
            <person name="Bruegger K."/>
            <person name="Skovgaard M."/>
            <person name="Redder P."/>
            <person name="She Q."/>
            <person name="Torarinsson E."/>
            <person name="Greve B."/>
            <person name="Awayez M."/>
            <person name="Zibat A."/>
            <person name="Klenk H.-P."/>
            <person name="Garrett R.A."/>
        </authorList>
    </citation>
    <scope>NUCLEOTIDE SEQUENCE [LARGE SCALE GENOMIC DNA]</scope>
    <source>
        <strain>ATCC 33909 / DSM 639 / JCM 8929 / NBRC 15157 / NCIMB 11770</strain>
    </source>
</reference>
<sequence length="382" mass="43464">MSLVEIIEGKARILIPNYKDYMKDGKFDPSWAPVFYNPKMILNRDLSVLAANVVKPKSLIDGLSATGVRGIRYGLEINGVEEIILNDIDSDAVELIKKNVKINDLESRAKIYNNNINSLLHEIKVDYVDIDPFGSPAPFLLSSFSAAKSKQYVAITATDLAALMCSSKTSARRKYGLICNKMSFSRELGLRGLISKAITEAAVVEKAVTPVFSFYNDYYYRVIFKVERGAKKVDRQLSKLVYYYECPKCGYRIESEYLQQMKCTNCNLVMQTYGPAYKESLVDYEFLNNMISELDKFSYFQTFSKLKSILLTIKDESKYSENYYRIDFLASLARVNVPRRDNVINCLVDASRTHLDPLGVKTSKNLDEIKECIKKLSSRNTS</sequence>
<gene>
    <name evidence="1" type="primary">trm1</name>
    <name type="ordered locus">Saci_1343</name>
</gene>
<protein>
    <recommendedName>
        <fullName evidence="1">tRNA (guanine(26)-N(2))-dimethyltransferase</fullName>
        <ecNumber evidence="1">2.1.1.216</ecNumber>
    </recommendedName>
    <alternativeName>
        <fullName evidence="1">tRNA 2,2-dimethylguanosine-26 methyltransferase</fullName>
    </alternativeName>
    <alternativeName>
        <fullName evidence="1">tRNA(guanine-26,N(2)-N(2)) methyltransferase</fullName>
    </alternativeName>
    <alternativeName>
        <fullName evidence="1">tRNA(m(2,2)G26)dimethyltransferase</fullName>
    </alternativeName>
</protein>
<proteinExistence type="inferred from homology"/>
<feature type="chain" id="PRO_1000197039" description="tRNA (guanine(26)-N(2))-dimethyltransferase">
    <location>
        <begin position="1"/>
        <end position="382"/>
    </location>
</feature>
<feature type="domain" description="Trm1 methyltransferase" evidence="1">
    <location>
        <begin position="4"/>
        <end position="373"/>
    </location>
</feature>
<feature type="binding site" evidence="1">
    <location>
        <position position="44"/>
    </location>
    <ligand>
        <name>S-adenosyl-L-methionine</name>
        <dbReference type="ChEBI" id="CHEBI:59789"/>
    </ligand>
</feature>
<feature type="binding site" evidence="1">
    <location>
        <position position="69"/>
    </location>
    <ligand>
        <name>S-adenosyl-L-methionine</name>
        <dbReference type="ChEBI" id="CHEBI:59789"/>
    </ligand>
</feature>
<feature type="binding site" evidence="1">
    <location>
        <position position="87"/>
    </location>
    <ligand>
        <name>S-adenosyl-L-methionine</name>
        <dbReference type="ChEBI" id="CHEBI:59789"/>
    </ligand>
</feature>
<feature type="binding site" evidence="1">
    <location>
        <position position="246"/>
    </location>
    <ligand>
        <name>Zn(2+)</name>
        <dbReference type="ChEBI" id="CHEBI:29105"/>
    </ligand>
</feature>
<feature type="binding site" evidence="1">
    <location>
        <position position="249"/>
    </location>
    <ligand>
        <name>Zn(2+)</name>
        <dbReference type="ChEBI" id="CHEBI:29105"/>
    </ligand>
</feature>
<feature type="binding site" evidence="1">
    <location>
        <position position="263"/>
    </location>
    <ligand>
        <name>Zn(2+)</name>
        <dbReference type="ChEBI" id="CHEBI:29105"/>
    </ligand>
</feature>
<feature type="binding site" evidence="1">
    <location>
        <position position="266"/>
    </location>
    <ligand>
        <name>Zn(2+)</name>
        <dbReference type="ChEBI" id="CHEBI:29105"/>
    </ligand>
</feature>
<keyword id="KW-0479">Metal-binding</keyword>
<keyword id="KW-0489">Methyltransferase</keyword>
<keyword id="KW-1185">Reference proteome</keyword>
<keyword id="KW-0694">RNA-binding</keyword>
<keyword id="KW-0949">S-adenosyl-L-methionine</keyword>
<keyword id="KW-0808">Transferase</keyword>
<keyword id="KW-0819">tRNA processing</keyword>
<keyword id="KW-0820">tRNA-binding</keyword>
<keyword id="KW-0862">Zinc</keyword>
<accession>Q4J947</accession>
<comment type="function">
    <text evidence="1">Dimethylates a single guanine residue at position 26 of a number of tRNAs using S-adenosyl-L-methionine as donor of the methyl groups.</text>
</comment>
<comment type="catalytic activity">
    <reaction evidence="1">
        <text>guanosine(26) in tRNA + 2 S-adenosyl-L-methionine = N(2)-dimethylguanosine(26) in tRNA + 2 S-adenosyl-L-homocysteine + 2 H(+)</text>
        <dbReference type="Rhea" id="RHEA:43140"/>
        <dbReference type="Rhea" id="RHEA-COMP:10359"/>
        <dbReference type="Rhea" id="RHEA-COMP:10360"/>
        <dbReference type="ChEBI" id="CHEBI:15378"/>
        <dbReference type="ChEBI" id="CHEBI:57856"/>
        <dbReference type="ChEBI" id="CHEBI:59789"/>
        <dbReference type="ChEBI" id="CHEBI:74269"/>
        <dbReference type="ChEBI" id="CHEBI:74513"/>
        <dbReference type="EC" id="2.1.1.216"/>
    </reaction>
</comment>
<comment type="similarity">
    <text evidence="1">Belongs to the class I-like SAM-binding methyltransferase superfamily. Trm1 family.</text>
</comment>